<feature type="signal peptide" evidence="2">
    <location>
        <begin position="1"/>
        <end position="18"/>
    </location>
</feature>
<feature type="chain" id="PRO_0000448516" description="Proapolipoprotein A-II">
    <location>
        <begin position="19"/>
        <end position="100"/>
    </location>
</feature>
<feature type="chain" id="PRO_0000448517" description="Apolipoprotein A-II" evidence="1">
    <location>
        <begin position="24"/>
        <end position="100"/>
    </location>
</feature>
<feature type="chain" id="PRO_0000448518" description="Truncated apolipoprotein A-II" evidence="1">
    <location>
        <begin position="24"/>
        <end position="99"/>
    </location>
</feature>
<feature type="modified residue" description="Pyrrolidone carboxylic acid" evidence="1">
    <location>
        <position position="24"/>
    </location>
</feature>
<protein>
    <recommendedName>
        <fullName>Apolipoprotein A-II</fullName>
        <shortName>Apo-AII</shortName>
        <shortName>ApoA-II</shortName>
    </recommendedName>
    <alternativeName>
        <fullName>Apolipoprotein A2</fullName>
    </alternativeName>
    <component>
        <recommendedName>
            <fullName>Proapolipoprotein A-II</fullName>
            <shortName>ProapoA-II</shortName>
        </recommendedName>
    </component>
    <component>
        <recommendedName>
            <fullName>Truncated apolipoprotein A-II</fullName>
        </recommendedName>
    </component>
</protein>
<dbReference type="EMBL" id="PITE01031202">
    <property type="status" value="NOT_ANNOTATED_CDS"/>
    <property type="molecule type" value="Genomic_DNA"/>
</dbReference>
<dbReference type="RefSeq" id="XP_045732040.1">
    <property type="nucleotide sequence ID" value="XM_045876084.1"/>
</dbReference>
<dbReference type="RefSeq" id="XP_045732041.1">
    <property type="nucleotide sequence ID" value="XM_045876085.3"/>
</dbReference>
<dbReference type="SMR" id="P0DTR1"/>
<dbReference type="GeneID" id="123845310"/>
<dbReference type="GO" id="GO:0034366">
    <property type="term" value="C:spherical high-density lipoprotein particle"/>
    <property type="evidence" value="ECO:0007669"/>
    <property type="project" value="TreeGrafter"/>
</dbReference>
<dbReference type="GO" id="GO:0120020">
    <property type="term" value="F:cholesterol transfer activity"/>
    <property type="evidence" value="ECO:0007669"/>
    <property type="project" value="TreeGrafter"/>
</dbReference>
<dbReference type="GO" id="GO:0008035">
    <property type="term" value="F:high-density lipoprotein particle binding"/>
    <property type="evidence" value="ECO:0007669"/>
    <property type="project" value="TreeGrafter"/>
</dbReference>
<dbReference type="GO" id="GO:0008289">
    <property type="term" value="F:lipid binding"/>
    <property type="evidence" value="ECO:0007669"/>
    <property type="project" value="InterPro"/>
</dbReference>
<dbReference type="GO" id="GO:0042632">
    <property type="term" value="P:cholesterol homeostasis"/>
    <property type="evidence" value="ECO:0007669"/>
    <property type="project" value="TreeGrafter"/>
</dbReference>
<dbReference type="GO" id="GO:0030301">
    <property type="term" value="P:cholesterol transport"/>
    <property type="evidence" value="ECO:0007669"/>
    <property type="project" value="TreeGrafter"/>
</dbReference>
<dbReference type="GO" id="GO:0042157">
    <property type="term" value="P:lipoprotein metabolic process"/>
    <property type="evidence" value="ECO:0007669"/>
    <property type="project" value="InterPro"/>
</dbReference>
<dbReference type="Gene3D" id="6.10.250.100">
    <property type="match status" value="1"/>
</dbReference>
<dbReference type="InterPro" id="IPR006801">
    <property type="entry name" value="ApoA-II"/>
</dbReference>
<dbReference type="InterPro" id="IPR036172">
    <property type="entry name" value="ApoA-II_sf"/>
</dbReference>
<dbReference type="PANTHER" id="PTHR11027">
    <property type="entry name" value="APOLIPOPROTEIN A-II"/>
    <property type="match status" value="1"/>
</dbReference>
<dbReference type="PANTHER" id="PTHR11027:SF0">
    <property type="entry name" value="APOLIPOPROTEIN A-II"/>
    <property type="match status" value="1"/>
</dbReference>
<dbReference type="Pfam" id="PF04711">
    <property type="entry name" value="ApoA-II"/>
    <property type="match status" value="1"/>
</dbReference>
<dbReference type="SUPFAM" id="SSF82936">
    <property type="entry name" value="Apolipoprotein A-II"/>
    <property type="match status" value="1"/>
</dbReference>
<keyword id="KW-0165">Cleavage on pair of basic residues</keyword>
<keyword id="KW-0345">HDL</keyword>
<keyword id="KW-0445">Lipid transport</keyword>
<keyword id="KW-0558">Oxidation</keyword>
<keyword id="KW-0597">Phosphoprotein</keyword>
<keyword id="KW-0873">Pyrrolidone carboxylic acid</keyword>
<keyword id="KW-0964">Secreted</keyword>
<keyword id="KW-0732">Signal</keyword>
<keyword id="KW-0813">Transport</keyword>
<comment type="function">
    <text>May stabilize HDL (high density lipoprotein) structure by its association with lipids, and affect the HDL metabolism.</text>
</comment>
<comment type="subunit">
    <text evidence="1">Monomer. Interacts with NAXE and NDRG1 (By similarity).</text>
</comment>
<comment type="subcellular location">
    <subcellularLocation>
        <location evidence="1">Secreted</location>
    </subcellularLocation>
</comment>
<comment type="similarity">
    <text evidence="3">Belongs to the apolipoprotein A2 family.</text>
</comment>
<evidence type="ECO:0000250" key="1">
    <source>
        <dbReference type="UniProtKB" id="P02652"/>
    </source>
</evidence>
<evidence type="ECO:0000255" key="2"/>
<evidence type="ECO:0000305" key="3"/>
<proteinExistence type="inferred from homology"/>
<organism>
    <name type="scientific">Mirounga angustirostris</name>
    <name type="common">Northern elephant seal</name>
    <name type="synonym">Macrorhinus angustirostris</name>
    <dbReference type="NCBI Taxonomy" id="9716"/>
    <lineage>
        <taxon>Eukaryota</taxon>
        <taxon>Metazoa</taxon>
        <taxon>Chordata</taxon>
        <taxon>Craniata</taxon>
        <taxon>Vertebrata</taxon>
        <taxon>Euteleostomi</taxon>
        <taxon>Mammalia</taxon>
        <taxon>Eutheria</taxon>
        <taxon>Laurasiatheria</taxon>
        <taxon>Carnivora</taxon>
        <taxon>Caniformia</taxon>
        <taxon>Pinnipedia</taxon>
        <taxon>Phocidae</taxon>
        <taxon>Monachinae</taxon>
        <taxon>Miroungini</taxon>
        <taxon>Mirounga</taxon>
    </lineage>
</organism>
<sequence>MKVLALAVLLLAVCSLEGAFVRRQAEEPNLQSLVAQYFQTMTDYGKDLVEKAKGPELQAQAKAYFEKTQEQLTPLVKKAGTDLINFLSNFMDLRTQPATQ</sequence>
<gene>
    <name type="primary">APOA2</name>
</gene>
<accession>P0DTR1</accession>
<reference key="1">
    <citation type="submission" date="2017-11" db="EMBL/GenBank/DDBJ databases">
        <authorList>
            <person name="Johnson J."/>
            <person name="Muren E."/>
            <person name="Swofford R."/>
            <person name="Turner-Maier J."/>
            <person name="Marinescu V.D."/>
            <person name="Genereux D.P."/>
            <person name="Alfoldi J."/>
            <person name="Birren B."/>
            <person name="Karlsson E.K."/>
            <person name="Lindblad-Toh K."/>
        </authorList>
    </citation>
    <scope>NUCLEOTIDE SEQUENCE [LARGE SCALE GENOMIC DNA]</scope>
</reference>
<reference key="2">
    <citation type="unpublished observations" date="2019-09">
        <authorList>
            <person name="Puppione D.L."/>
        </authorList>
    </citation>
    <scope>IDENTIFICATION</scope>
</reference>
<name>APOA2_MIRAN</name>